<feature type="initiator methionine" description="Removed" evidence="1">
    <location>
        <position position="1"/>
    </location>
</feature>
<feature type="chain" id="PRO_0000199908" description="Sulfite reductase [NADPH] hemoprotein beta-component">
    <location>
        <begin position="2"/>
        <end position="570"/>
    </location>
</feature>
<feature type="binding site" evidence="1">
    <location>
        <position position="434"/>
    </location>
    <ligand>
        <name>[4Fe-4S] cluster</name>
        <dbReference type="ChEBI" id="CHEBI:49883"/>
    </ligand>
</feature>
<feature type="binding site" evidence="1">
    <location>
        <position position="440"/>
    </location>
    <ligand>
        <name>[4Fe-4S] cluster</name>
        <dbReference type="ChEBI" id="CHEBI:49883"/>
    </ligand>
</feature>
<feature type="binding site" evidence="1">
    <location>
        <position position="479"/>
    </location>
    <ligand>
        <name>[4Fe-4S] cluster</name>
        <dbReference type="ChEBI" id="CHEBI:49883"/>
    </ligand>
</feature>
<feature type="binding site" evidence="1">
    <location>
        <position position="483"/>
    </location>
    <ligand>
        <name>[4Fe-4S] cluster</name>
        <dbReference type="ChEBI" id="CHEBI:49883"/>
    </ligand>
</feature>
<feature type="binding site" description="axial binding residue" evidence="1">
    <location>
        <position position="483"/>
    </location>
    <ligand>
        <name>siroheme</name>
        <dbReference type="ChEBI" id="CHEBI:60052"/>
    </ligand>
    <ligandPart>
        <name>Fe</name>
        <dbReference type="ChEBI" id="CHEBI:18248"/>
    </ligandPart>
</feature>
<comment type="function">
    <text>Component of the sulfite reductase complex that catalyzes the 6-electron reduction of sulfite to sulfide. This is one of several activities required for the biosynthesis of L-cysteine from sulfate.</text>
</comment>
<comment type="catalytic activity">
    <reaction>
        <text>hydrogen sulfide + 3 NADP(+) + 3 H2O = sulfite + 3 NADPH + 4 H(+)</text>
        <dbReference type="Rhea" id="RHEA:13801"/>
        <dbReference type="ChEBI" id="CHEBI:15377"/>
        <dbReference type="ChEBI" id="CHEBI:15378"/>
        <dbReference type="ChEBI" id="CHEBI:17359"/>
        <dbReference type="ChEBI" id="CHEBI:29919"/>
        <dbReference type="ChEBI" id="CHEBI:57783"/>
        <dbReference type="ChEBI" id="CHEBI:58349"/>
        <dbReference type="EC" id="1.8.1.2"/>
    </reaction>
</comment>
<comment type="cofactor">
    <cofactor>
        <name>siroheme</name>
        <dbReference type="ChEBI" id="CHEBI:60052"/>
    </cofactor>
    <text>Binds 1 siroheme per subunit.</text>
</comment>
<comment type="cofactor">
    <cofactor>
        <name>[4Fe-4S] cluster</name>
        <dbReference type="ChEBI" id="CHEBI:49883"/>
    </cofactor>
    <text>Binds 1 [4Fe-4S] cluster per subunit.</text>
</comment>
<comment type="pathway">
    <text>Sulfur metabolism; hydrogen sulfide biosynthesis; hydrogen sulfide from sulfite (NADPH route): step 1/1.</text>
</comment>
<comment type="subunit">
    <text>Alpha(8)-beta(8). The alpha component is a flavoprotein, the beta component is a hemoprotein.</text>
</comment>
<comment type="similarity">
    <text evidence="2">Belongs to the nitrite and sulfite reductase 4Fe-4S domain family.</text>
</comment>
<accession>P17845</accession>
<sequence length="570" mass="64023">MSEKHPGPLVVEGKLSDAERMKLESNYLRGTIAEDLNDGLTGGFKGDNFLLIRFHGMYQQDDRDIRAERAAQKLEPRHAMLLRCRLPGGVITTTQWQAIDKFAADNTIYGSIRLTNRQTFQFHGILKKNVKPVHQMLHSVGLDALATANDMNRNVLCTSNPYESQLHAEAYEWAKKISEHLLPRTRAYAEIWLDQEKVATTDEEPILGQTYLPRKFKTTVVIPPQNDIDLHANDMNFVAIAENGKLVGFNLLVGGGLSIEHGNKKTYARTASEFGYLPLEHTLAVAEAVVTTQRDWGNRTDRKNAKTKYTLERVGLETFKAEVERRAGIKFEPIRPYEFTGRGDRIGWVKGIDDKWHLTLFIENGRILDYPGRPLKTGLLEIAKIHQGEFRITANQNLIIASVPESQKAKIETLARDHGLMNAVKPQRENSMACVSFPTCPLAMAEAERFLPSFTDKVEAILEKHGIPDEHIVMRVTGCPNGCGRAMLAEIGLVGKAPGRYNLHLGGNRIGSRIPRMYKENIAEPDILASLDELIGRWAKEREAGEGFGDFTVRAGIIRPVLDPARDFWE</sequence>
<gene>
    <name type="primary">cysI</name>
    <name type="ordered locus">STM2947</name>
</gene>
<protein>
    <recommendedName>
        <fullName>Sulfite reductase [NADPH] hemoprotein beta-component</fullName>
        <shortName>SiR-HP</shortName>
        <shortName>SiRHP</shortName>
        <ecNumber>1.8.1.2</ecNumber>
    </recommendedName>
</protein>
<keyword id="KW-0004">4Fe-4S</keyword>
<keyword id="KW-0028">Amino-acid biosynthesis</keyword>
<keyword id="KW-0198">Cysteine biosynthesis</keyword>
<keyword id="KW-0349">Heme</keyword>
<keyword id="KW-0408">Iron</keyword>
<keyword id="KW-0411">Iron-sulfur</keyword>
<keyword id="KW-0479">Metal-binding</keyword>
<keyword id="KW-0521">NADP</keyword>
<keyword id="KW-0560">Oxidoreductase</keyword>
<keyword id="KW-1185">Reference proteome</keyword>
<name>CYSI_SALTY</name>
<proteinExistence type="inferred from homology"/>
<reference key="1">
    <citation type="journal article" date="1989" name="J. Biol. Chem.">
        <title>Characterization of the cysJIH regions of Salmonella typhimurium and Escherichia coli B. DNA sequences of cysI and cysH and a model for the siroheme-Fe4S4 active center of sulfite reductase hemoprotein based on amino acid homology with spinach nitrite reductase.</title>
        <authorList>
            <person name="Ostrowski J."/>
            <person name="Wu J.-Y."/>
            <person name="Rueger D.C."/>
            <person name="Miller B.E."/>
            <person name="Siegel L.M."/>
            <person name="Kredich N.M."/>
        </authorList>
    </citation>
    <scope>NUCLEOTIDE SEQUENCE [GENOMIC DNA]</scope>
    <source>
        <strain>LT2</strain>
    </source>
</reference>
<reference key="2">
    <citation type="journal article" date="2001" name="Nature">
        <title>Complete genome sequence of Salmonella enterica serovar Typhimurium LT2.</title>
        <authorList>
            <person name="McClelland M."/>
            <person name="Sanderson K.E."/>
            <person name="Spieth J."/>
            <person name="Clifton S.W."/>
            <person name="Latreille P."/>
            <person name="Courtney L."/>
            <person name="Porwollik S."/>
            <person name="Ali J."/>
            <person name="Dante M."/>
            <person name="Du F."/>
            <person name="Hou S."/>
            <person name="Layman D."/>
            <person name="Leonard S."/>
            <person name="Nguyen C."/>
            <person name="Scott K."/>
            <person name="Holmes A."/>
            <person name="Grewal N."/>
            <person name="Mulvaney E."/>
            <person name="Ryan E."/>
            <person name="Sun H."/>
            <person name="Florea L."/>
            <person name="Miller W."/>
            <person name="Stoneking T."/>
            <person name="Nhan M."/>
            <person name="Waterston R."/>
            <person name="Wilson R.K."/>
        </authorList>
    </citation>
    <scope>NUCLEOTIDE SEQUENCE [LARGE SCALE GENOMIC DNA]</scope>
    <source>
        <strain>LT2 / SGSC1412 / ATCC 700720</strain>
    </source>
</reference>
<dbReference type="EC" id="1.8.1.2"/>
<dbReference type="EMBL" id="M23007">
    <property type="protein sequence ID" value="AAA27047.1"/>
    <property type="molecule type" value="Genomic_DNA"/>
</dbReference>
<dbReference type="EMBL" id="AE006468">
    <property type="protein sequence ID" value="AAL21827.1"/>
    <property type="molecule type" value="Genomic_DNA"/>
</dbReference>
<dbReference type="PIR" id="A34354">
    <property type="entry name" value="A34354"/>
</dbReference>
<dbReference type="RefSeq" id="NP_461868.1">
    <property type="nucleotide sequence ID" value="NC_003197.2"/>
</dbReference>
<dbReference type="RefSeq" id="WP_001290660.1">
    <property type="nucleotide sequence ID" value="NC_003197.2"/>
</dbReference>
<dbReference type="SMR" id="P17845"/>
<dbReference type="STRING" id="99287.STM2947"/>
<dbReference type="PaxDb" id="99287-STM2947"/>
<dbReference type="GeneID" id="1254470"/>
<dbReference type="KEGG" id="stm:STM2947"/>
<dbReference type="PATRIC" id="fig|99287.12.peg.3108"/>
<dbReference type="HOGENOM" id="CLU_001975_3_2_6"/>
<dbReference type="OMA" id="IKISGCM"/>
<dbReference type="PhylomeDB" id="P17845"/>
<dbReference type="BioCyc" id="SENT99287:STM2947-MONOMER"/>
<dbReference type="UniPathway" id="UPA00140">
    <property type="reaction ID" value="UER00207"/>
</dbReference>
<dbReference type="Proteomes" id="UP000001014">
    <property type="component" value="Chromosome"/>
</dbReference>
<dbReference type="GO" id="GO:0009337">
    <property type="term" value="C:sulfite reductase complex (NADPH)"/>
    <property type="evidence" value="ECO:0000318"/>
    <property type="project" value="GO_Central"/>
</dbReference>
<dbReference type="GO" id="GO:0051539">
    <property type="term" value="F:4 iron, 4 sulfur cluster binding"/>
    <property type="evidence" value="ECO:0007669"/>
    <property type="project" value="UniProtKB-KW"/>
</dbReference>
<dbReference type="GO" id="GO:0020037">
    <property type="term" value="F:heme binding"/>
    <property type="evidence" value="ECO:0007669"/>
    <property type="project" value="InterPro"/>
</dbReference>
<dbReference type="GO" id="GO:0046872">
    <property type="term" value="F:metal ion binding"/>
    <property type="evidence" value="ECO:0007669"/>
    <property type="project" value="UniProtKB-KW"/>
</dbReference>
<dbReference type="GO" id="GO:0050661">
    <property type="term" value="F:NADP binding"/>
    <property type="evidence" value="ECO:0007669"/>
    <property type="project" value="InterPro"/>
</dbReference>
<dbReference type="GO" id="GO:0004783">
    <property type="term" value="F:sulfite reductase (NADPH) activity"/>
    <property type="evidence" value="ECO:0007669"/>
    <property type="project" value="UniProtKB-UniRule"/>
</dbReference>
<dbReference type="GO" id="GO:0019344">
    <property type="term" value="P:cysteine biosynthetic process"/>
    <property type="evidence" value="ECO:0007669"/>
    <property type="project" value="UniProtKB-KW"/>
</dbReference>
<dbReference type="GO" id="GO:0070814">
    <property type="term" value="P:hydrogen sulfide biosynthetic process"/>
    <property type="evidence" value="ECO:0007669"/>
    <property type="project" value="UniProtKB-UniRule"/>
</dbReference>
<dbReference type="GO" id="GO:0000103">
    <property type="term" value="P:sulfate assimilation"/>
    <property type="evidence" value="ECO:0000318"/>
    <property type="project" value="GO_Central"/>
</dbReference>
<dbReference type="FunFam" id="3.30.413.10:FF:000003">
    <property type="entry name" value="Sulfite reductase [NADPH] hemoprotein beta-component"/>
    <property type="match status" value="1"/>
</dbReference>
<dbReference type="FunFam" id="3.30.413.10:FF:000004">
    <property type="entry name" value="Sulfite reductase [NADPH] hemoprotein beta-component"/>
    <property type="match status" value="1"/>
</dbReference>
<dbReference type="Gene3D" id="3.30.413.10">
    <property type="entry name" value="Sulfite Reductase Hemoprotein, domain 1"/>
    <property type="match status" value="2"/>
</dbReference>
<dbReference type="HAMAP" id="MF_01540">
    <property type="entry name" value="CysI"/>
    <property type="match status" value="1"/>
</dbReference>
<dbReference type="InterPro" id="IPR011786">
    <property type="entry name" value="CysI"/>
</dbReference>
<dbReference type="InterPro" id="IPR005117">
    <property type="entry name" value="NiRdtase/SiRdtase_haem-b_fer"/>
</dbReference>
<dbReference type="InterPro" id="IPR036136">
    <property type="entry name" value="Nit/Sulf_reduc_fer-like_dom_sf"/>
</dbReference>
<dbReference type="InterPro" id="IPR006067">
    <property type="entry name" value="NO2/SO3_Rdtase_4Fe4S_dom"/>
</dbReference>
<dbReference type="InterPro" id="IPR045169">
    <property type="entry name" value="NO2/SO3_Rdtase_4Fe4S_prot"/>
</dbReference>
<dbReference type="InterPro" id="IPR045854">
    <property type="entry name" value="NO2/SO3_Rdtase_4Fe4S_sf"/>
</dbReference>
<dbReference type="InterPro" id="IPR006066">
    <property type="entry name" value="NO2/SO3_Rdtase_FeS/sirohaem_BS"/>
</dbReference>
<dbReference type="NCBIfam" id="TIGR02041">
    <property type="entry name" value="CysI"/>
    <property type="match status" value="1"/>
</dbReference>
<dbReference type="NCBIfam" id="NF010029">
    <property type="entry name" value="PRK13504.1"/>
    <property type="match status" value="1"/>
</dbReference>
<dbReference type="PANTHER" id="PTHR11493:SF47">
    <property type="entry name" value="SULFITE REDUCTASE [NADPH] SUBUNIT BETA"/>
    <property type="match status" value="1"/>
</dbReference>
<dbReference type="PANTHER" id="PTHR11493">
    <property type="entry name" value="SULFITE REDUCTASE [NADPH] SUBUNIT BETA-RELATED"/>
    <property type="match status" value="1"/>
</dbReference>
<dbReference type="Pfam" id="PF01077">
    <property type="entry name" value="NIR_SIR"/>
    <property type="match status" value="1"/>
</dbReference>
<dbReference type="Pfam" id="PF03460">
    <property type="entry name" value="NIR_SIR_ferr"/>
    <property type="match status" value="2"/>
</dbReference>
<dbReference type="PRINTS" id="PR00397">
    <property type="entry name" value="SIROHAEM"/>
</dbReference>
<dbReference type="SUPFAM" id="SSF56014">
    <property type="entry name" value="Nitrite and sulphite reductase 4Fe-4S domain-like"/>
    <property type="match status" value="2"/>
</dbReference>
<dbReference type="SUPFAM" id="SSF55124">
    <property type="entry name" value="Nitrite/Sulfite reductase N-terminal domain-like"/>
    <property type="match status" value="2"/>
</dbReference>
<dbReference type="PROSITE" id="PS00365">
    <property type="entry name" value="NIR_SIR"/>
    <property type="match status" value="1"/>
</dbReference>
<evidence type="ECO:0000250" key="1"/>
<evidence type="ECO:0000305" key="2"/>
<organism>
    <name type="scientific">Salmonella typhimurium (strain LT2 / SGSC1412 / ATCC 700720)</name>
    <dbReference type="NCBI Taxonomy" id="99287"/>
    <lineage>
        <taxon>Bacteria</taxon>
        <taxon>Pseudomonadati</taxon>
        <taxon>Pseudomonadota</taxon>
        <taxon>Gammaproteobacteria</taxon>
        <taxon>Enterobacterales</taxon>
        <taxon>Enterobacteriaceae</taxon>
        <taxon>Salmonella</taxon>
    </lineage>
</organism>